<name>RIMM_LACLS</name>
<gene>
    <name evidence="1" type="primary">rimM</name>
    <name type="ordered locus">LACR_1659</name>
</gene>
<reference key="1">
    <citation type="journal article" date="2006" name="Proc. Natl. Acad. Sci. U.S.A.">
        <title>Comparative genomics of the lactic acid bacteria.</title>
        <authorList>
            <person name="Makarova K.S."/>
            <person name="Slesarev A."/>
            <person name="Wolf Y.I."/>
            <person name="Sorokin A."/>
            <person name="Mirkin B."/>
            <person name="Koonin E.V."/>
            <person name="Pavlov A."/>
            <person name="Pavlova N."/>
            <person name="Karamychev V."/>
            <person name="Polouchine N."/>
            <person name="Shakhova V."/>
            <person name="Grigoriev I."/>
            <person name="Lou Y."/>
            <person name="Rohksar D."/>
            <person name="Lucas S."/>
            <person name="Huang K."/>
            <person name="Goodstein D.M."/>
            <person name="Hawkins T."/>
            <person name="Plengvidhya V."/>
            <person name="Welker D."/>
            <person name="Hughes J."/>
            <person name="Goh Y."/>
            <person name="Benson A."/>
            <person name="Baldwin K."/>
            <person name="Lee J.-H."/>
            <person name="Diaz-Muniz I."/>
            <person name="Dosti B."/>
            <person name="Smeianov V."/>
            <person name="Wechter W."/>
            <person name="Barabote R."/>
            <person name="Lorca G."/>
            <person name="Altermann E."/>
            <person name="Barrangou R."/>
            <person name="Ganesan B."/>
            <person name="Xie Y."/>
            <person name="Rawsthorne H."/>
            <person name="Tamir D."/>
            <person name="Parker C."/>
            <person name="Breidt F."/>
            <person name="Broadbent J.R."/>
            <person name="Hutkins R."/>
            <person name="O'Sullivan D."/>
            <person name="Steele J."/>
            <person name="Unlu G."/>
            <person name="Saier M.H. Jr."/>
            <person name="Klaenhammer T."/>
            <person name="Richardson P."/>
            <person name="Kozyavkin S."/>
            <person name="Weimer B.C."/>
            <person name="Mills D.A."/>
        </authorList>
    </citation>
    <scope>NUCLEOTIDE SEQUENCE [LARGE SCALE GENOMIC DNA]</scope>
    <source>
        <strain>SK11</strain>
    </source>
</reference>
<proteinExistence type="inferred from homology"/>
<keyword id="KW-0143">Chaperone</keyword>
<keyword id="KW-0963">Cytoplasm</keyword>
<keyword id="KW-0690">Ribosome biogenesis</keyword>
<keyword id="KW-0698">rRNA processing</keyword>
<sequence length="171" mass="19649">MENFYKVGTIVNTQGLQGEVRVLPSTDFANERFSKGAVLALFDDKDNYIQDLKVKSGRLQKNFYVVKFEGFYHINDVEKYKGYVVKIAQENQEELNDGEFYYHEIIGSDVYENDILIGQISEILQPGANDVWVVKRKGKRDLLLPYIPPVVLKVDVAQHRVDVDIMEGLDD</sequence>
<feature type="chain" id="PRO_1000001187" description="Ribosome maturation factor RimM">
    <location>
        <begin position="1"/>
        <end position="171"/>
    </location>
</feature>
<feature type="domain" description="PRC barrel" evidence="1">
    <location>
        <begin position="97"/>
        <end position="169"/>
    </location>
</feature>
<protein>
    <recommendedName>
        <fullName evidence="1">Ribosome maturation factor RimM</fullName>
    </recommendedName>
</protein>
<organism>
    <name type="scientific">Lactococcus lactis subsp. cremoris (strain SK11)</name>
    <dbReference type="NCBI Taxonomy" id="272622"/>
    <lineage>
        <taxon>Bacteria</taxon>
        <taxon>Bacillati</taxon>
        <taxon>Bacillota</taxon>
        <taxon>Bacilli</taxon>
        <taxon>Lactobacillales</taxon>
        <taxon>Streptococcaceae</taxon>
        <taxon>Lactococcus</taxon>
        <taxon>Lactococcus cremoris subsp. cremoris</taxon>
    </lineage>
</organism>
<evidence type="ECO:0000255" key="1">
    <source>
        <dbReference type="HAMAP-Rule" id="MF_00014"/>
    </source>
</evidence>
<comment type="function">
    <text evidence="1">An accessory protein needed during the final step in the assembly of 30S ribosomal subunit, possibly for assembly of the head region. Essential for efficient processing of 16S rRNA. May be needed both before and after RbfA during the maturation of 16S rRNA. It has affinity for free ribosomal 30S subunits but not for 70S ribosomes.</text>
</comment>
<comment type="subunit">
    <text evidence="1">Binds ribosomal protein uS19.</text>
</comment>
<comment type="subcellular location">
    <subcellularLocation>
        <location evidence="1">Cytoplasm</location>
    </subcellularLocation>
</comment>
<comment type="domain">
    <text evidence="1">The PRC barrel domain binds ribosomal protein uS19.</text>
</comment>
<comment type="similarity">
    <text evidence="1">Belongs to the RimM family.</text>
</comment>
<accession>Q02Y16</accession>
<dbReference type="EMBL" id="CP000425">
    <property type="protein sequence ID" value="ABJ73156.1"/>
    <property type="molecule type" value="Genomic_DNA"/>
</dbReference>
<dbReference type="RefSeq" id="WP_011676595.1">
    <property type="nucleotide sequence ID" value="NC_008527.1"/>
</dbReference>
<dbReference type="SMR" id="Q02Y16"/>
<dbReference type="GeneID" id="61109807"/>
<dbReference type="KEGG" id="llc:LACR_1659"/>
<dbReference type="HOGENOM" id="CLU_077636_3_1_9"/>
<dbReference type="Proteomes" id="UP000000240">
    <property type="component" value="Chromosome"/>
</dbReference>
<dbReference type="GO" id="GO:0005737">
    <property type="term" value="C:cytoplasm"/>
    <property type="evidence" value="ECO:0007669"/>
    <property type="project" value="UniProtKB-SubCell"/>
</dbReference>
<dbReference type="GO" id="GO:0005840">
    <property type="term" value="C:ribosome"/>
    <property type="evidence" value="ECO:0007669"/>
    <property type="project" value="InterPro"/>
</dbReference>
<dbReference type="GO" id="GO:0043022">
    <property type="term" value="F:ribosome binding"/>
    <property type="evidence" value="ECO:0007669"/>
    <property type="project" value="InterPro"/>
</dbReference>
<dbReference type="GO" id="GO:0042274">
    <property type="term" value="P:ribosomal small subunit biogenesis"/>
    <property type="evidence" value="ECO:0007669"/>
    <property type="project" value="UniProtKB-UniRule"/>
</dbReference>
<dbReference type="GO" id="GO:0006364">
    <property type="term" value="P:rRNA processing"/>
    <property type="evidence" value="ECO:0007669"/>
    <property type="project" value="UniProtKB-UniRule"/>
</dbReference>
<dbReference type="Gene3D" id="2.30.30.240">
    <property type="entry name" value="PRC-barrel domain"/>
    <property type="match status" value="1"/>
</dbReference>
<dbReference type="Gene3D" id="2.40.30.60">
    <property type="entry name" value="RimM"/>
    <property type="match status" value="1"/>
</dbReference>
<dbReference type="HAMAP" id="MF_00014">
    <property type="entry name" value="Ribosome_mat_RimM"/>
    <property type="match status" value="1"/>
</dbReference>
<dbReference type="InterPro" id="IPR027275">
    <property type="entry name" value="PRC-brl_dom"/>
</dbReference>
<dbReference type="InterPro" id="IPR011033">
    <property type="entry name" value="PRC_barrel-like_sf"/>
</dbReference>
<dbReference type="InterPro" id="IPR011961">
    <property type="entry name" value="RimM"/>
</dbReference>
<dbReference type="InterPro" id="IPR002676">
    <property type="entry name" value="RimM_N"/>
</dbReference>
<dbReference type="InterPro" id="IPR036976">
    <property type="entry name" value="RimM_N_sf"/>
</dbReference>
<dbReference type="InterPro" id="IPR009000">
    <property type="entry name" value="Transl_B-barrel_sf"/>
</dbReference>
<dbReference type="NCBIfam" id="TIGR02273">
    <property type="entry name" value="16S_RimM"/>
    <property type="match status" value="1"/>
</dbReference>
<dbReference type="PANTHER" id="PTHR33692">
    <property type="entry name" value="RIBOSOME MATURATION FACTOR RIMM"/>
    <property type="match status" value="1"/>
</dbReference>
<dbReference type="PANTHER" id="PTHR33692:SF1">
    <property type="entry name" value="RIBOSOME MATURATION FACTOR RIMM"/>
    <property type="match status" value="1"/>
</dbReference>
<dbReference type="Pfam" id="PF05239">
    <property type="entry name" value="PRC"/>
    <property type="match status" value="1"/>
</dbReference>
<dbReference type="Pfam" id="PF01782">
    <property type="entry name" value="RimM"/>
    <property type="match status" value="1"/>
</dbReference>
<dbReference type="SUPFAM" id="SSF50346">
    <property type="entry name" value="PRC-barrel domain"/>
    <property type="match status" value="1"/>
</dbReference>
<dbReference type="SUPFAM" id="SSF50447">
    <property type="entry name" value="Translation proteins"/>
    <property type="match status" value="1"/>
</dbReference>